<name>TATA_ARATH</name>
<protein>
    <recommendedName>
        <fullName>Sec-independent protein translocase protein TATA, chloroplastic</fullName>
    </recommendedName>
    <alternativeName>
        <fullName>Protein THYLAKOID ASSEMBLY 4</fullName>
    </alternativeName>
    <alternativeName>
        <fullName>Protein TWIN-ARGININE TRANSLOCATION A</fullName>
    </alternativeName>
</protein>
<sequence length="147" mass="15713">MATSVATLSSPPPVSLPLLSSSRSSFFSNCFTVTTRPNTRSLVAIGRRIRQEPTRKPLTCNALFGLGVPELAVIAGVAALLFGPKKLPEIGKSIGKTVKSFQQAAKEFESELKTEPEESVAESSQVATSNKEEEKKTEVSSSSKENV</sequence>
<dbReference type="EMBL" id="AF262041">
    <property type="protein sequence ID" value="AAF67362.1"/>
    <property type="molecule type" value="Genomic_DNA"/>
</dbReference>
<dbReference type="EMBL" id="CP002688">
    <property type="protein sequence ID" value="AED93831.1"/>
    <property type="molecule type" value="Genomic_DNA"/>
</dbReference>
<dbReference type="EMBL" id="AF325006">
    <property type="protein sequence ID" value="AAG40358.1"/>
    <property type="molecule type" value="mRNA"/>
</dbReference>
<dbReference type="EMBL" id="AY056276">
    <property type="protein sequence ID" value="AAL07125.1"/>
    <property type="molecule type" value="mRNA"/>
</dbReference>
<dbReference type="EMBL" id="AY091429">
    <property type="protein sequence ID" value="AAM14368.1"/>
    <property type="molecule type" value="mRNA"/>
</dbReference>
<dbReference type="RefSeq" id="NP_198227.1">
    <property type="nucleotide sequence ID" value="NM_122758.4"/>
</dbReference>
<dbReference type="PDB" id="7B7O">
    <property type="method" value="NMR"/>
    <property type="chains" value="A=62-114"/>
</dbReference>
<dbReference type="PDBsum" id="7B7O"/>
<dbReference type="SMR" id="Q9LKU2"/>
<dbReference type="FunCoup" id="Q9LKU2">
    <property type="interactions" value="966"/>
</dbReference>
<dbReference type="STRING" id="3702.Q9LKU2"/>
<dbReference type="TCDB" id="2.A.64.2.1">
    <property type="family name" value="the twin arginine targeting (tat) family"/>
</dbReference>
<dbReference type="iPTMnet" id="Q9LKU2"/>
<dbReference type="PaxDb" id="3702-AT5G28750.1"/>
<dbReference type="ProteomicsDB" id="234233"/>
<dbReference type="EnsemblPlants" id="AT5G28750.1">
    <property type="protein sequence ID" value="AT5G28750.1"/>
    <property type="gene ID" value="AT5G28750"/>
</dbReference>
<dbReference type="GeneID" id="832987"/>
<dbReference type="Gramene" id="AT5G28750.1">
    <property type="protein sequence ID" value="AT5G28750.1"/>
    <property type="gene ID" value="AT5G28750"/>
</dbReference>
<dbReference type="KEGG" id="ath:AT5G28750"/>
<dbReference type="Araport" id="AT5G28750"/>
<dbReference type="TAIR" id="AT5G28750"/>
<dbReference type="eggNOG" id="ENOG502S7UG">
    <property type="taxonomic scope" value="Eukaryota"/>
</dbReference>
<dbReference type="HOGENOM" id="CLU_135887_0_0_1"/>
<dbReference type="InParanoid" id="Q9LKU2"/>
<dbReference type="OMA" id="WGTTAEP"/>
<dbReference type="PhylomeDB" id="Q9LKU2"/>
<dbReference type="PRO" id="PR:Q9LKU2"/>
<dbReference type="Proteomes" id="UP000006548">
    <property type="component" value="Chromosome 5"/>
</dbReference>
<dbReference type="ExpressionAtlas" id="Q9LKU2">
    <property type="expression patterns" value="baseline and differential"/>
</dbReference>
<dbReference type="GO" id="GO:0009941">
    <property type="term" value="C:chloroplast envelope"/>
    <property type="evidence" value="ECO:0007005"/>
    <property type="project" value="TAIR"/>
</dbReference>
<dbReference type="GO" id="GO:0009535">
    <property type="term" value="C:chloroplast thylakoid membrane"/>
    <property type="evidence" value="ECO:0007005"/>
    <property type="project" value="TAIR"/>
</dbReference>
<dbReference type="GO" id="GO:0016020">
    <property type="term" value="C:membrane"/>
    <property type="evidence" value="ECO:0000314"/>
    <property type="project" value="TAIR"/>
</dbReference>
<dbReference type="GO" id="GO:0033281">
    <property type="term" value="C:TAT protein transport complex"/>
    <property type="evidence" value="ECO:0000314"/>
    <property type="project" value="UniProtKB"/>
</dbReference>
<dbReference type="GO" id="GO:0051260">
    <property type="term" value="P:protein homooligomerization"/>
    <property type="evidence" value="ECO:0000314"/>
    <property type="project" value="TAIR"/>
</dbReference>
<dbReference type="GO" id="GO:0043953">
    <property type="term" value="P:protein transport by the Tat complex"/>
    <property type="evidence" value="ECO:0007669"/>
    <property type="project" value="InterPro"/>
</dbReference>
<dbReference type="GO" id="GO:0032594">
    <property type="term" value="P:protein transport within lipid bilayer"/>
    <property type="evidence" value="ECO:0000314"/>
    <property type="project" value="TAIR"/>
</dbReference>
<dbReference type="FunFam" id="1.20.5.3310:FF:000003">
    <property type="entry name" value="Sec-independent protein translocase protein TATB, chloroplastic"/>
    <property type="match status" value="1"/>
</dbReference>
<dbReference type="Gene3D" id="1.20.5.3310">
    <property type="match status" value="1"/>
</dbReference>
<dbReference type="HAMAP" id="MF_00236">
    <property type="entry name" value="TatA_E"/>
    <property type="match status" value="1"/>
</dbReference>
<dbReference type="InterPro" id="IPR003369">
    <property type="entry name" value="TatA/B/E"/>
</dbReference>
<dbReference type="InterPro" id="IPR006312">
    <property type="entry name" value="TatA/E"/>
</dbReference>
<dbReference type="NCBIfam" id="NF011429">
    <property type="entry name" value="PRK14857.1"/>
    <property type="match status" value="1"/>
</dbReference>
<dbReference type="NCBIfam" id="NF011430">
    <property type="entry name" value="PRK14861.1"/>
    <property type="match status" value="1"/>
</dbReference>
<dbReference type="NCBIfam" id="TIGR01411">
    <property type="entry name" value="tatAE"/>
    <property type="match status" value="1"/>
</dbReference>
<dbReference type="PANTHER" id="PTHR33162">
    <property type="entry name" value="SEC-INDEPENDENT PROTEIN TRANSLOCASE PROTEIN TATA, CHLOROPLASTIC"/>
    <property type="match status" value="1"/>
</dbReference>
<dbReference type="PANTHER" id="PTHR33162:SF1">
    <property type="entry name" value="SEC-INDEPENDENT PROTEIN TRANSLOCASE PROTEIN TATA, CHLOROPLASTIC"/>
    <property type="match status" value="1"/>
</dbReference>
<dbReference type="Pfam" id="PF02416">
    <property type="entry name" value="TatA_B_E"/>
    <property type="match status" value="1"/>
</dbReference>
<comment type="function">
    <text evidence="1">Part of the twin-arginine translocation (Tat) system that transports large folded proteins containing a characteristic twin-arginine motif in their signal peptide across the thylakoid membrane. Involved in delta pH-dependent protein transport required for chloroplast development, especially thylakoid membrane formation. TATC and TATB mediate precursor recognition, whereas TATA facilitates translocation (By similarity).</text>
</comment>
<comment type="subunit">
    <text evidence="4">In thylakoid membranes, TATC and TATB form a large receptor complex, containing about eight TATC-TATB pairs, which binds the precursor protein. Twin arginine signal peptide promotes pH-triggered docking of TATA oligomers to TATC-TATB receptor complex, inducing a conformational switch of TATA that results in activation of the translocase. TATA dissociates from TATC-TATB upon completion of translocation.</text>
</comment>
<comment type="subcellular location">
    <subcellularLocation>
        <location evidence="1">Plastid</location>
        <location evidence="1">Chloroplast thylakoid membrane</location>
        <topology evidence="1">Single-pass membrane protein</topology>
    </subcellularLocation>
    <text evidence="1">The C-terminus is located in the stroma.</text>
</comment>
<comment type="similarity">
    <text evidence="5">Belongs to the TatA/E family.</text>
</comment>
<organism>
    <name type="scientific">Arabidopsis thaliana</name>
    <name type="common">Mouse-ear cress</name>
    <dbReference type="NCBI Taxonomy" id="3702"/>
    <lineage>
        <taxon>Eukaryota</taxon>
        <taxon>Viridiplantae</taxon>
        <taxon>Streptophyta</taxon>
        <taxon>Embryophyta</taxon>
        <taxon>Tracheophyta</taxon>
        <taxon>Spermatophyta</taxon>
        <taxon>Magnoliopsida</taxon>
        <taxon>eudicotyledons</taxon>
        <taxon>Gunneridae</taxon>
        <taxon>Pentapetalae</taxon>
        <taxon>rosids</taxon>
        <taxon>malvids</taxon>
        <taxon>Brassicales</taxon>
        <taxon>Brassicaceae</taxon>
        <taxon>Camelineae</taxon>
        <taxon>Arabidopsis</taxon>
    </lineage>
</organism>
<feature type="transit peptide" description="Chloroplast" evidence="2">
    <location>
        <begin position="1"/>
        <end position="59"/>
    </location>
</feature>
<feature type="chain" id="PRO_0000419918" description="Sec-independent protein translocase protein TATA, chloroplastic">
    <location>
        <begin position="60"/>
        <end position="147"/>
    </location>
</feature>
<feature type="topological domain" description="Lumenal" evidence="2">
    <location>
        <begin position="60"/>
        <end position="61"/>
    </location>
</feature>
<feature type="transmembrane region" description="Helical" evidence="2">
    <location>
        <begin position="62"/>
        <end position="82"/>
    </location>
</feature>
<feature type="topological domain" description="Stromal" evidence="2">
    <location>
        <begin position="83"/>
        <end position="147"/>
    </location>
</feature>
<feature type="region of interest" description="Disordered" evidence="3">
    <location>
        <begin position="109"/>
        <end position="147"/>
    </location>
</feature>
<feature type="helix" evidence="6">
    <location>
        <begin position="68"/>
        <end position="82"/>
    </location>
</feature>
<feature type="strand" evidence="6">
    <location>
        <begin position="83"/>
        <end position="86"/>
    </location>
</feature>
<feature type="helix" evidence="6">
    <location>
        <begin position="89"/>
        <end position="93"/>
    </location>
</feature>
<feature type="helix" evidence="6">
    <location>
        <begin position="95"/>
        <end position="108"/>
    </location>
</feature>
<reference key="1">
    <citation type="journal article" date="2000" name="Nature">
        <title>Sequence and analysis of chromosome 5 of the plant Arabidopsis thaliana.</title>
        <authorList>
            <person name="Tabata S."/>
            <person name="Kaneko T."/>
            <person name="Nakamura Y."/>
            <person name="Kotani H."/>
            <person name="Kato T."/>
            <person name="Asamizu E."/>
            <person name="Miyajima N."/>
            <person name="Sasamoto S."/>
            <person name="Kimura T."/>
            <person name="Hosouchi T."/>
            <person name="Kawashima K."/>
            <person name="Kohara M."/>
            <person name="Matsumoto M."/>
            <person name="Matsuno A."/>
            <person name="Muraki A."/>
            <person name="Nakayama S."/>
            <person name="Nakazaki N."/>
            <person name="Naruo K."/>
            <person name="Okumura S."/>
            <person name="Shinpo S."/>
            <person name="Takeuchi C."/>
            <person name="Wada T."/>
            <person name="Watanabe A."/>
            <person name="Yamada M."/>
            <person name="Yasuda M."/>
            <person name="Sato S."/>
            <person name="de la Bastide M."/>
            <person name="Huang E."/>
            <person name="Spiegel L."/>
            <person name="Gnoj L."/>
            <person name="O'Shaughnessy A."/>
            <person name="Preston R."/>
            <person name="Habermann K."/>
            <person name="Murray J."/>
            <person name="Johnson D."/>
            <person name="Rohlfing T."/>
            <person name="Nelson J."/>
            <person name="Stoneking T."/>
            <person name="Pepin K."/>
            <person name="Spieth J."/>
            <person name="Sekhon M."/>
            <person name="Armstrong J."/>
            <person name="Becker M."/>
            <person name="Belter E."/>
            <person name="Cordum H."/>
            <person name="Cordes M."/>
            <person name="Courtney L."/>
            <person name="Courtney W."/>
            <person name="Dante M."/>
            <person name="Du H."/>
            <person name="Edwards J."/>
            <person name="Fryman J."/>
            <person name="Haakensen B."/>
            <person name="Lamar E."/>
            <person name="Latreille P."/>
            <person name="Leonard S."/>
            <person name="Meyer R."/>
            <person name="Mulvaney E."/>
            <person name="Ozersky P."/>
            <person name="Riley A."/>
            <person name="Strowmatt C."/>
            <person name="Wagner-McPherson C."/>
            <person name="Wollam A."/>
            <person name="Yoakum M."/>
            <person name="Bell M."/>
            <person name="Dedhia N."/>
            <person name="Parnell L."/>
            <person name="Shah R."/>
            <person name="Rodriguez M."/>
            <person name="Hoon See L."/>
            <person name="Vil D."/>
            <person name="Baker J."/>
            <person name="Kirchoff K."/>
            <person name="Toth K."/>
            <person name="King L."/>
            <person name="Bahret A."/>
            <person name="Miller B."/>
            <person name="Marra M.A."/>
            <person name="Martienssen R."/>
            <person name="McCombie W.R."/>
            <person name="Wilson R.K."/>
            <person name="Murphy G."/>
            <person name="Bancroft I."/>
            <person name="Volckaert G."/>
            <person name="Wambutt R."/>
            <person name="Duesterhoeft A."/>
            <person name="Stiekema W."/>
            <person name="Pohl T."/>
            <person name="Entian K.-D."/>
            <person name="Terryn N."/>
            <person name="Hartley N."/>
            <person name="Bent E."/>
            <person name="Johnson S."/>
            <person name="Langham S.-A."/>
            <person name="McCullagh B."/>
            <person name="Robben J."/>
            <person name="Grymonprez B."/>
            <person name="Zimmermann W."/>
            <person name="Ramsperger U."/>
            <person name="Wedler H."/>
            <person name="Balke K."/>
            <person name="Wedler E."/>
            <person name="Peters S."/>
            <person name="van Staveren M."/>
            <person name="Dirkse W."/>
            <person name="Mooijman P."/>
            <person name="Klein Lankhorst R."/>
            <person name="Weitzenegger T."/>
            <person name="Bothe G."/>
            <person name="Rose M."/>
            <person name="Hauf J."/>
            <person name="Berneiser S."/>
            <person name="Hempel S."/>
            <person name="Feldpausch M."/>
            <person name="Lamberth S."/>
            <person name="Villarroel R."/>
            <person name="Gielen J."/>
            <person name="Ardiles W."/>
            <person name="Bents O."/>
            <person name="Lemcke K."/>
            <person name="Kolesov G."/>
            <person name="Mayer K.F.X."/>
            <person name="Rudd S."/>
            <person name="Schoof H."/>
            <person name="Schueller C."/>
            <person name="Zaccaria P."/>
            <person name="Mewes H.-W."/>
            <person name="Bevan M."/>
            <person name="Fransz P.F."/>
        </authorList>
    </citation>
    <scope>NUCLEOTIDE SEQUENCE [LARGE SCALE GENOMIC DNA]</scope>
    <source>
        <strain>cv. Columbia</strain>
    </source>
</reference>
<reference key="2">
    <citation type="journal article" date="2017" name="Plant J.">
        <title>Araport11: a complete reannotation of the Arabidopsis thaliana reference genome.</title>
        <authorList>
            <person name="Cheng C.Y."/>
            <person name="Krishnakumar V."/>
            <person name="Chan A.P."/>
            <person name="Thibaud-Nissen F."/>
            <person name="Schobel S."/>
            <person name="Town C.D."/>
        </authorList>
    </citation>
    <scope>GENOME REANNOTATION</scope>
    <source>
        <strain>cv. Columbia</strain>
    </source>
</reference>
<reference key="3">
    <citation type="journal article" date="2003" name="Science">
        <title>Empirical analysis of transcriptional activity in the Arabidopsis genome.</title>
        <authorList>
            <person name="Yamada K."/>
            <person name="Lim J."/>
            <person name="Dale J.M."/>
            <person name="Chen H."/>
            <person name="Shinn P."/>
            <person name="Palm C.J."/>
            <person name="Southwick A.M."/>
            <person name="Wu H.C."/>
            <person name="Kim C.J."/>
            <person name="Nguyen M."/>
            <person name="Pham P.K."/>
            <person name="Cheuk R.F."/>
            <person name="Karlin-Newmann G."/>
            <person name="Liu S.X."/>
            <person name="Lam B."/>
            <person name="Sakano H."/>
            <person name="Wu T."/>
            <person name="Yu G."/>
            <person name="Miranda M."/>
            <person name="Quach H.L."/>
            <person name="Tripp M."/>
            <person name="Chang C.H."/>
            <person name="Lee J.M."/>
            <person name="Toriumi M.J."/>
            <person name="Chan M.M."/>
            <person name="Tang C.C."/>
            <person name="Onodera C.S."/>
            <person name="Deng J.M."/>
            <person name="Akiyama K."/>
            <person name="Ansari Y."/>
            <person name="Arakawa T."/>
            <person name="Banh J."/>
            <person name="Banno F."/>
            <person name="Bowser L."/>
            <person name="Brooks S.Y."/>
            <person name="Carninci P."/>
            <person name="Chao Q."/>
            <person name="Choy N."/>
            <person name="Enju A."/>
            <person name="Goldsmith A.D."/>
            <person name="Gurjal M."/>
            <person name="Hansen N.F."/>
            <person name="Hayashizaki Y."/>
            <person name="Johnson-Hopson C."/>
            <person name="Hsuan V.W."/>
            <person name="Iida K."/>
            <person name="Karnes M."/>
            <person name="Khan S."/>
            <person name="Koesema E."/>
            <person name="Ishida J."/>
            <person name="Jiang P.X."/>
            <person name="Jones T."/>
            <person name="Kawai J."/>
            <person name="Kamiya A."/>
            <person name="Meyers C."/>
            <person name="Nakajima M."/>
            <person name="Narusaka M."/>
            <person name="Seki M."/>
            <person name="Sakurai T."/>
            <person name="Satou M."/>
            <person name="Tamse R."/>
            <person name="Vaysberg M."/>
            <person name="Wallender E.K."/>
            <person name="Wong C."/>
            <person name="Yamamura Y."/>
            <person name="Yuan S."/>
            <person name="Shinozaki K."/>
            <person name="Davis R.W."/>
            <person name="Theologis A."/>
            <person name="Ecker J.R."/>
        </authorList>
    </citation>
    <scope>NUCLEOTIDE SEQUENCE [LARGE SCALE MRNA]</scope>
    <source>
        <strain>cv. Columbia</strain>
    </source>
</reference>
<reference key="4">
    <citation type="journal article" date="2009" name="Biochim. Biophys. Acta">
        <title>Tat subunit stoichiometry in Arabidopsis thaliana challenges the proposed function of TatA as the translocation pore.</title>
        <authorList>
            <person name="Jakob M."/>
            <person name="Kaiser S."/>
            <person name="Gutensohn M."/>
            <person name="Hanner P."/>
            <person name="Kloesgen R.B."/>
        </authorList>
    </citation>
    <scope>SUBUNIT</scope>
</reference>
<proteinExistence type="evidence at protein level"/>
<accession>Q9LKU2</accession>
<keyword id="KW-0002">3D-structure</keyword>
<keyword id="KW-0150">Chloroplast</keyword>
<keyword id="KW-0472">Membrane</keyword>
<keyword id="KW-0934">Plastid</keyword>
<keyword id="KW-0653">Protein transport</keyword>
<keyword id="KW-1185">Reference proteome</keyword>
<keyword id="KW-0793">Thylakoid</keyword>
<keyword id="KW-0809">Transit peptide</keyword>
<keyword id="KW-0811">Translocation</keyword>
<keyword id="KW-0812">Transmembrane</keyword>
<keyword id="KW-1133">Transmembrane helix</keyword>
<keyword id="KW-0813">Transport</keyword>
<gene>
    <name type="primary">TATA</name>
    <name type="synonym">THA4</name>
    <name type="ordered locus">At5g28750</name>
    <name type="ORF">T32B20.e</name>
</gene>
<evidence type="ECO:0000250" key="1"/>
<evidence type="ECO:0000255" key="2"/>
<evidence type="ECO:0000256" key="3">
    <source>
        <dbReference type="SAM" id="MobiDB-lite"/>
    </source>
</evidence>
<evidence type="ECO:0000269" key="4">
    <source>
    </source>
</evidence>
<evidence type="ECO:0000305" key="5"/>
<evidence type="ECO:0007829" key="6">
    <source>
        <dbReference type="PDB" id="7B7O"/>
    </source>
</evidence>